<protein>
    <recommendedName>
        <fullName evidence="1">Vacuolar membrane protease</fullName>
        <ecNumber evidence="6">3.4.-.-</ecNumber>
    </recommendedName>
    <alternativeName>
        <fullName evidence="1">FXNA-related family protease 1</fullName>
    </alternativeName>
</protein>
<accession>E9EYB5</accession>
<evidence type="ECO:0000250" key="1">
    <source>
        <dbReference type="UniProtKB" id="P38244"/>
    </source>
</evidence>
<evidence type="ECO:0000250" key="2">
    <source>
        <dbReference type="UniProtKB" id="P80561"/>
    </source>
</evidence>
<evidence type="ECO:0000255" key="3"/>
<evidence type="ECO:0000255" key="4">
    <source>
        <dbReference type="PROSITE-ProRule" id="PRU00498"/>
    </source>
</evidence>
<evidence type="ECO:0000256" key="5">
    <source>
        <dbReference type="SAM" id="MobiDB-lite"/>
    </source>
</evidence>
<evidence type="ECO:0000305" key="6"/>
<organism>
    <name type="scientific">Metarhizium robertsii (strain ARSEF 23 / ATCC MYA-3075)</name>
    <name type="common">Metarhizium anisopliae (strain ARSEF 23)</name>
    <dbReference type="NCBI Taxonomy" id="655844"/>
    <lineage>
        <taxon>Eukaryota</taxon>
        <taxon>Fungi</taxon>
        <taxon>Dikarya</taxon>
        <taxon>Ascomycota</taxon>
        <taxon>Pezizomycotina</taxon>
        <taxon>Sordariomycetes</taxon>
        <taxon>Hypocreomycetidae</taxon>
        <taxon>Hypocreales</taxon>
        <taxon>Clavicipitaceae</taxon>
        <taxon>Metarhizium</taxon>
    </lineage>
</organism>
<name>PFF1_METRA</name>
<keyword id="KW-0325">Glycoprotein</keyword>
<keyword id="KW-0378">Hydrolase</keyword>
<keyword id="KW-0472">Membrane</keyword>
<keyword id="KW-0479">Metal-binding</keyword>
<keyword id="KW-0482">Metalloprotease</keyword>
<keyword id="KW-0645">Protease</keyword>
<keyword id="KW-0812">Transmembrane</keyword>
<keyword id="KW-1133">Transmembrane helix</keyword>
<keyword id="KW-0926">Vacuole</keyword>
<keyword id="KW-0862">Zinc</keyword>
<comment type="function">
    <text evidence="1">May be involved in vacuolar sorting and osmoregulation.</text>
</comment>
<comment type="cofactor">
    <cofactor evidence="2">
        <name>Zn(2+)</name>
        <dbReference type="ChEBI" id="CHEBI:29105"/>
    </cofactor>
    <text evidence="2">Binds 2 Zn(2+) ions per subunit.</text>
</comment>
<comment type="subcellular location">
    <subcellularLocation>
        <location evidence="1">Vacuole membrane</location>
        <topology evidence="3">Multi-pass membrane protein</topology>
    </subcellularLocation>
</comment>
<comment type="similarity">
    <text evidence="6">Belongs to the peptidase M28 family.</text>
</comment>
<gene>
    <name type="ORF">MAA_05014</name>
</gene>
<proteinExistence type="inferred from homology"/>
<sequence>MKLGNPFVFRPGPVSFWTTIVYLAIIIPLIYVQETVPPAPSEKELPQGVNLTEAWLDLEVITRSYHPFNSHSNDIVREYLMRRSRDILERNGIDYTTDLTGGVPWESRYLSSAEHPVQAAEVSARPRGATLFDDRISNVTMTNPQPNNTMGRYFEGNNFYVYIHGSEDPEGDWWTSDNVQRVARNGAGVLVNCHFDSVSTGYGATDDGMACISLLQLLSHFTSEGHQPKNGIVLLFNNAEEDGLFGAQAFGYSPLVQFCNTFVNLEGAGAGGRAMLFRTTDLEAAEAYSKSPHPFGSVVASNAFERGVIKSGTDYSVFVDNYGQRGLDIAFYSPRSRYHTEEDDARHTSVDSIWHMLSAALATTESLARTTSTQFNGPRSDGRKDLVQSGRPTAGVWFDWYGSSWSAFALRGLFAWTLTLLITTPLVLFVVTYLLVRDDKWYFFATKVDSTVGDGEETVSFGGWKGFVRFPFALVVATALTIGSVFLLAKVNPLIIYSSGYSVWAMMISLFYFVSWLLLRGAHFVRPSALQRGFTLIWLFIITWVLSVFAAVAEDRMNMGAVYPLAFLHTFAFAAVLISLLEQYALPAKQDFARQVSGENEEEEEQEQENLLGDGGNDANEQNNEDRGDTDIAATPTETTPLRAGEEGHGSSEQTTTFANTYRRPVPETRVETRSGNNRKRSFPPYENEQAWSGRLPTWTWFIQLLLLVPLYVTVLGNLALVQTTSIGKTGTDGSSLLAPLMGVGILAILLLLPLTPFIHRVSHHVPLFLFLVFIGTLIYNLTAFPFSDNNRFKFYFKQVVDLDKGSNVVTLNGLEEFVRPVISSIPTPAGQRIHCDEDPFLSNLRNCQYDASLLPPDVADGEELESLISIEASKSKNGKTILVSLDALNTRVCYLDTSFPIFGFSVHGGAKRDDRFGSFPPEGLQQIQLWRRDWEKGWNVTLHLGGHVLPMNEDSVEATEVDEVDDDPSGGELKRGAAKELIVTARCAWSDANSANTIPAFHEVKQFMPRWAIVAKKTVGLVEITKKIKVA</sequence>
<reference key="1">
    <citation type="journal article" date="2011" name="PLoS Genet.">
        <title>Genome sequencing and comparative transcriptomics of the model entomopathogenic fungi Metarhizium anisopliae and M. acridum.</title>
        <authorList>
            <person name="Gao Q."/>
            <person name="Jin K."/>
            <person name="Ying S.-H."/>
            <person name="Zhang Y."/>
            <person name="Xiao G."/>
            <person name="Shang Y."/>
            <person name="Duan Z."/>
            <person name="Hu X."/>
            <person name="Xie X.-Q."/>
            <person name="Zhou G."/>
            <person name="Peng G."/>
            <person name="Luo Z."/>
            <person name="Huang W."/>
            <person name="Wang B."/>
            <person name="Fang W."/>
            <person name="Wang S."/>
            <person name="Zhong Y."/>
            <person name="Ma L.-J."/>
            <person name="St Leger R.J."/>
            <person name="Zhao G.-P."/>
            <person name="Pei Y."/>
            <person name="Feng M.-G."/>
            <person name="Xia Y."/>
            <person name="Wang C."/>
        </authorList>
    </citation>
    <scope>NUCLEOTIDE SEQUENCE [LARGE SCALE GENOMIC DNA]</scope>
    <source>
        <strain>ARSEF 23 / ATCC MYA-3075</strain>
    </source>
</reference>
<reference key="2">
    <citation type="journal article" date="2014" name="Proc. Natl. Acad. Sci. U.S.A.">
        <title>Trajectory and genomic determinants of fungal-pathogen speciation and host adaptation.</title>
        <authorList>
            <person name="Hu X."/>
            <person name="Xiao G."/>
            <person name="Zheng P."/>
            <person name="Shang Y."/>
            <person name="Su Y."/>
            <person name="Zhang X."/>
            <person name="Liu X."/>
            <person name="Zhan S."/>
            <person name="St Leger R.J."/>
            <person name="Wang C."/>
        </authorList>
    </citation>
    <scope>GENOME REANNOTATION</scope>
    <source>
        <strain>ARSEF 23 / ATCC MYA-3075</strain>
    </source>
</reference>
<feature type="chain" id="PRO_0000411724" description="Vacuolar membrane protease">
    <location>
        <begin position="1"/>
        <end position="1032"/>
    </location>
</feature>
<feature type="topological domain" description="Cytoplasmic" evidence="1">
    <location>
        <begin position="1"/>
        <end position="11"/>
    </location>
</feature>
<feature type="transmembrane region" description="Helical; Name=1" evidence="3">
    <location>
        <begin position="12"/>
        <end position="32"/>
    </location>
</feature>
<feature type="topological domain" description="Vacuolar" evidence="1">
    <location>
        <begin position="33"/>
        <end position="415"/>
    </location>
</feature>
<feature type="transmembrane region" description="Helical; Name=2" evidence="3">
    <location>
        <begin position="416"/>
        <end position="436"/>
    </location>
</feature>
<feature type="topological domain" description="Cytoplasmic" evidence="1">
    <location>
        <begin position="437"/>
        <end position="469"/>
    </location>
</feature>
<feature type="transmembrane region" description="Helical; Name=3" evidence="3">
    <location>
        <begin position="470"/>
        <end position="490"/>
    </location>
</feature>
<feature type="topological domain" description="Vacuolar" evidence="1">
    <location>
        <begin position="491"/>
        <end position="493"/>
    </location>
</feature>
<feature type="transmembrane region" description="Helical; Name=4" evidence="3">
    <location>
        <begin position="494"/>
        <end position="514"/>
    </location>
</feature>
<feature type="topological domain" description="Cytoplasmic" evidence="1">
    <location>
        <begin position="515"/>
        <end position="532"/>
    </location>
</feature>
<feature type="transmembrane region" description="Helical; Name=5" evidence="3">
    <location>
        <begin position="533"/>
        <end position="553"/>
    </location>
</feature>
<feature type="topological domain" description="Vacuolar" evidence="1">
    <location>
        <begin position="554"/>
        <end position="560"/>
    </location>
</feature>
<feature type="transmembrane region" description="Helical; Name=6" evidence="3">
    <location>
        <begin position="561"/>
        <end position="581"/>
    </location>
</feature>
<feature type="topological domain" description="Cytoplasmic" evidence="1">
    <location>
        <begin position="582"/>
        <end position="701"/>
    </location>
</feature>
<feature type="transmembrane region" description="Helical; Name=7" evidence="3">
    <location>
        <begin position="702"/>
        <end position="722"/>
    </location>
</feature>
<feature type="topological domain" description="Vacuolar" evidence="1">
    <location>
        <begin position="723"/>
        <end position="738"/>
    </location>
</feature>
<feature type="transmembrane region" description="Helical; Name=8" evidence="3">
    <location>
        <begin position="739"/>
        <end position="759"/>
    </location>
</feature>
<feature type="topological domain" description="Cytoplasmic" evidence="1">
    <location>
        <begin position="760"/>
        <end position="766"/>
    </location>
</feature>
<feature type="transmembrane region" description="Helical; Name=9" evidence="3">
    <location>
        <begin position="767"/>
        <end position="787"/>
    </location>
</feature>
<feature type="topological domain" description="Vacuolar" evidence="1">
    <location>
        <begin position="788"/>
        <end position="1032"/>
    </location>
</feature>
<feature type="region of interest" description="Disordered" evidence="5">
    <location>
        <begin position="595"/>
        <end position="688"/>
    </location>
</feature>
<feature type="compositionally biased region" description="Acidic residues" evidence="5">
    <location>
        <begin position="599"/>
        <end position="608"/>
    </location>
</feature>
<feature type="compositionally biased region" description="Polar residues" evidence="5">
    <location>
        <begin position="651"/>
        <end position="660"/>
    </location>
</feature>
<feature type="active site" description="Proton acceptor" evidence="2">
    <location>
        <position position="240"/>
    </location>
</feature>
<feature type="binding site" evidence="2">
    <location>
        <position position="194"/>
    </location>
    <ligand>
        <name>Zn(2+)</name>
        <dbReference type="ChEBI" id="CHEBI:29105"/>
        <label>1</label>
        <note>catalytic</note>
    </ligand>
</feature>
<feature type="binding site" evidence="2">
    <location>
        <position position="206"/>
    </location>
    <ligand>
        <name>Zn(2+)</name>
        <dbReference type="ChEBI" id="CHEBI:29105"/>
        <label>1</label>
        <note>catalytic</note>
    </ligand>
</feature>
<feature type="binding site" evidence="2">
    <location>
        <position position="206"/>
    </location>
    <ligand>
        <name>Zn(2+)</name>
        <dbReference type="ChEBI" id="CHEBI:29105"/>
        <label>2</label>
        <note>catalytic</note>
    </ligand>
</feature>
<feature type="binding site" evidence="2">
    <location>
        <position position="241"/>
    </location>
    <ligand>
        <name>Zn(2+)</name>
        <dbReference type="ChEBI" id="CHEBI:29105"/>
        <label>2</label>
        <note>catalytic</note>
    </ligand>
</feature>
<feature type="binding site" evidence="2">
    <location>
        <position position="266"/>
    </location>
    <ligand>
        <name>Zn(2+)</name>
        <dbReference type="ChEBI" id="CHEBI:29105"/>
        <label>1</label>
        <note>catalytic</note>
    </ligand>
</feature>
<feature type="binding site" evidence="2">
    <location>
        <position position="339"/>
    </location>
    <ligand>
        <name>Zn(2+)</name>
        <dbReference type="ChEBI" id="CHEBI:29105"/>
        <label>2</label>
        <note>catalytic</note>
    </ligand>
</feature>
<feature type="site" description="Transition state stabilizer" evidence="2">
    <location>
        <position position="338"/>
    </location>
</feature>
<feature type="glycosylation site" description="N-linked (GlcNAc...) asparagine" evidence="4">
    <location>
        <position position="50"/>
    </location>
</feature>
<feature type="glycosylation site" description="N-linked (GlcNAc...) asparagine" evidence="4">
    <location>
        <position position="138"/>
    </location>
</feature>
<feature type="glycosylation site" description="N-linked (GlcNAc...) asparagine" evidence="4">
    <location>
        <position position="147"/>
    </location>
</feature>
<feature type="glycosylation site" description="N-linked (GlcNAc...) asparagine" evidence="4">
    <location>
        <position position="940"/>
    </location>
</feature>
<dbReference type="EC" id="3.4.-.-" evidence="6"/>
<dbReference type="EMBL" id="ADNJ02000001">
    <property type="protein sequence ID" value="EFZ00086.1"/>
    <property type="molecule type" value="Genomic_DNA"/>
</dbReference>
<dbReference type="RefSeq" id="XP_007820716.1">
    <property type="nucleotide sequence ID" value="XM_007822525.1"/>
</dbReference>
<dbReference type="SMR" id="E9EYB5"/>
<dbReference type="GeneID" id="19259300"/>
<dbReference type="KEGG" id="maj:MAA_05014"/>
<dbReference type="HOGENOM" id="CLU_006412_1_0_1"/>
<dbReference type="OrthoDB" id="76293at2759"/>
<dbReference type="Proteomes" id="UP000002498">
    <property type="component" value="Unassembled WGS sequence"/>
</dbReference>
<dbReference type="GO" id="GO:0005774">
    <property type="term" value="C:vacuolar membrane"/>
    <property type="evidence" value="ECO:0007669"/>
    <property type="project" value="UniProtKB-SubCell"/>
</dbReference>
<dbReference type="GO" id="GO:0046872">
    <property type="term" value="F:metal ion binding"/>
    <property type="evidence" value="ECO:0007669"/>
    <property type="project" value="UniProtKB-KW"/>
</dbReference>
<dbReference type="GO" id="GO:0008235">
    <property type="term" value="F:metalloexopeptidase activity"/>
    <property type="evidence" value="ECO:0007669"/>
    <property type="project" value="InterPro"/>
</dbReference>
<dbReference type="GO" id="GO:0006508">
    <property type="term" value="P:proteolysis"/>
    <property type="evidence" value="ECO:0007669"/>
    <property type="project" value="UniProtKB-KW"/>
</dbReference>
<dbReference type="CDD" id="cd03875">
    <property type="entry name" value="M28_Fxna_like"/>
    <property type="match status" value="1"/>
</dbReference>
<dbReference type="FunFam" id="3.40.630.10:FF:000057">
    <property type="entry name" value="Vacuolar membrane protease"/>
    <property type="match status" value="1"/>
</dbReference>
<dbReference type="Gene3D" id="3.40.630.10">
    <property type="entry name" value="Zn peptidases"/>
    <property type="match status" value="1"/>
</dbReference>
<dbReference type="InterPro" id="IPR048024">
    <property type="entry name" value="Fxna-like_M28_dom"/>
</dbReference>
<dbReference type="InterPro" id="IPR045175">
    <property type="entry name" value="M28_fam"/>
</dbReference>
<dbReference type="InterPro" id="IPR007484">
    <property type="entry name" value="Peptidase_M28"/>
</dbReference>
<dbReference type="InterPro" id="IPR053975">
    <property type="entry name" value="PFF1_C"/>
</dbReference>
<dbReference type="InterPro" id="IPR053976">
    <property type="entry name" value="PFF1_TM"/>
</dbReference>
<dbReference type="PANTHER" id="PTHR12147">
    <property type="entry name" value="METALLOPEPTIDASE M28 FAMILY MEMBER"/>
    <property type="match status" value="1"/>
</dbReference>
<dbReference type="PANTHER" id="PTHR12147:SF58">
    <property type="entry name" value="VACUOLAR MEMBRANE PROTEASE"/>
    <property type="match status" value="1"/>
</dbReference>
<dbReference type="Pfam" id="PF04389">
    <property type="entry name" value="Peptidase_M28"/>
    <property type="match status" value="1"/>
</dbReference>
<dbReference type="Pfam" id="PF22250">
    <property type="entry name" value="PFF1_C"/>
    <property type="match status" value="1"/>
</dbReference>
<dbReference type="Pfam" id="PF22251">
    <property type="entry name" value="PFF1_TM"/>
    <property type="match status" value="1"/>
</dbReference>
<dbReference type="SUPFAM" id="SSF53187">
    <property type="entry name" value="Zn-dependent exopeptidases"/>
    <property type="match status" value="1"/>
</dbReference>